<protein>
    <recommendedName>
        <fullName>FMRFamide-like neuropeptide AF1</fullName>
    </recommendedName>
</protein>
<accession>P31889</accession>
<name>FAF1_ASCSU</name>
<comment type="function">
    <text>Potent modulator of inhibitory motorneurons. Reduces the input resistance and blocks slow oscillatory potentials in these cells.</text>
</comment>
<comment type="subcellular location">
    <subcellularLocation>
        <location>Secreted</location>
    </subcellularLocation>
</comment>
<comment type="tissue specificity">
    <text>Found in the nerve cords and a variety of ganglia particularly in the anterior regions.</text>
</comment>
<comment type="similarity">
    <text evidence="2">Belongs to the FARP (FMRFamide related peptide) family.</text>
</comment>
<dbReference type="GO" id="GO:0005576">
    <property type="term" value="C:extracellular region"/>
    <property type="evidence" value="ECO:0007669"/>
    <property type="project" value="UniProtKB-SubCell"/>
</dbReference>
<dbReference type="GO" id="GO:0007218">
    <property type="term" value="P:neuropeptide signaling pathway"/>
    <property type="evidence" value="ECO:0007669"/>
    <property type="project" value="UniProtKB-KW"/>
</dbReference>
<proteinExistence type="evidence at protein level"/>
<keyword id="KW-0027">Amidation</keyword>
<keyword id="KW-0903">Direct protein sequencing</keyword>
<keyword id="KW-0527">Neuropeptide</keyword>
<keyword id="KW-0964">Secreted</keyword>
<reference key="1">
    <citation type="journal article" date="1989" name="Neuron">
        <title>AF1, a sequenced bioactive neuropeptide isolated from the nematode Ascaris suum.</title>
        <authorList>
            <person name="Cowden C."/>
            <person name="Stretton A.O.W."/>
            <person name="Davis R.E."/>
        </authorList>
    </citation>
    <scope>PROTEIN SEQUENCE</scope>
    <scope>AMIDATION AT PHE-7</scope>
</reference>
<sequence>KNEFIRF</sequence>
<evidence type="ECO:0000269" key="1">
    <source>
    </source>
</evidence>
<evidence type="ECO:0000305" key="2"/>
<feature type="peptide" id="PRO_0000043655" description="FMRFamide-like neuropeptide AF1">
    <location>
        <begin position="1"/>
        <end position="7"/>
    </location>
</feature>
<feature type="modified residue" description="Phenylalanine amide" evidence="1">
    <location>
        <position position="7"/>
    </location>
</feature>
<organism>
    <name type="scientific">Ascaris suum</name>
    <name type="common">Pig roundworm</name>
    <name type="synonym">Ascaris lumbricoides</name>
    <dbReference type="NCBI Taxonomy" id="6253"/>
    <lineage>
        <taxon>Eukaryota</taxon>
        <taxon>Metazoa</taxon>
        <taxon>Ecdysozoa</taxon>
        <taxon>Nematoda</taxon>
        <taxon>Chromadorea</taxon>
        <taxon>Rhabditida</taxon>
        <taxon>Spirurina</taxon>
        <taxon>Ascaridomorpha</taxon>
        <taxon>Ascaridoidea</taxon>
        <taxon>Ascarididae</taxon>
        <taxon>Ascaris</taxon>
    </lineage>
</organism>